<comment type="function">
    <text evidence="2">Plays a role in odontogenesis.</text>
</comment>
<comment type="subcellular location">
    <subcellularLocation>
        <location evidence="1">Cytoplasm</location>
    </subcellularLocation>
    <subcellularLocation>
        <location evidence="1">Nucleus</location>
    </subcellularLocation>
</comment>
<comment type="developmental stage">
    <text evidence="2">Expressed in the developing ceratobranchials and abdomen from 3 to 6 dpf.</text>
</comment>
<comment type="disruption phenotype">
    <text evidence="2">Morpholino knockdown of the protein results in increased incidence of agomphosis (absence of teeth).</text>
</comment>
<proteinExistence type="evidence at transcript level"/>
<feature type="chain" id="PRO_0000439812" description="Protein SSUH2 homolog">
    <location>
        <begin position="1"/>
        <end position="361"/>
    </location>
</feature>
<feature type="sequence conflict" description="In Ref. 2; AAI24354." evidence="3" ref="2">
    <original>S</original>
    <variation>T</variation>
    <location>
        <position position="222"/>
    </location>
</feature>
<gene>
    <name evidence="1" type="primary">ssuh2</name>
    <name evidence="4" type="synonym">ssuh2rs1</name>
    <name type="ORF">zgc:153440</name>
</gene>
<name>SSUH2_DANRE</name>
<dbReference type="EMBL" id="BX469901">
    <property type="status" value="NOT_ANNOTATED_CDS"/>
    <property type="molecule type" value="Genomic_DNA"/>
</dbReference>
<dbReference type="EMBL" id="BC124353">
    <property type="protein sequence ID" value="AAI24354.1"/>
    <property type="molecule type" value="mRNA"/>
</dbReference>
<dbReference type="RefSeq" id="NP_001070126.1">
    <property type="nucleotide sequence ID" value="NM_001076658.1"/>
</dbReference>
<dbReference type="SMR" id="Q08C76"/>
<dbReference type="FunCoup" id="Q08C76">
    <property type="interactions" value="149"/>
</dbReference>
<dbReference type="STRING" id="7955.ENSDARP00000086779"/>
<dbReference type="PaxDb" id="7955-ENSDARP00000086779"/>
<dbReference type="Ensembl" id="ENSDART00000092347">
    <property type="protein sequence ID" value="ENSDARP00000086779"/>
    <property type="gene ID" value="ENSDARG00000063292"/>
</dbReference>
<dbReference type="Ensembl" id="ENSDART00000192380">
    <property type="protein sequence ID" value="ENSDARP00000151445"/>
    <property type="gene ID" value="ENSDARG00000063292"/>
</dbReference>
<dbReference type="GeneID" id="767720"/>
<dbReference type="KEGG" id="dre:767720"/>
<dbReference type="AGR" id="ZFIN:ZDB-GENE-060929-994"/>
<dbReference type="CTD" id="767720"/>
<dbReference type="ZFIN" id="ZDB-GENE-060929-994">
    <property type="gene designation" value="ssuh2rs1"/>
</dbReference>
<dbReference type="eggNOG" id="KOG2813">
    <property type="taxonomic scope" value="Eukaryota"/>
</dbReference>
<dbReference type="InParanoid" id="Q08C76"/>
<dbReference type="OMA" id="KVHTDDY"/>
<dbReference type="OrthoDB" id="3355217at2759"/>
<dbReference type="PhylomeDB" id="Q08C76"/>
<dbReference type="TreeFam" id="TF320855"/>
<dbReference type="PRO" id="PR:Q08C76"/>
<dbReference type="Proteomes" id="UP000000437">
    <property type="component" value="Chromosome 8"/>
</dbReference>
<dbReference type="Bgee" id="ENSDARG00000063292">
    <property type="expression patterns" value="Expressed in larva and 26 other cell types or tissues"/>
</dbReference>
<dbReference type="ExpressionAtlas" id="Q08C76">
    <property type="expression patterns" value="baseline and differential"/>
</dbReference>
<dbReference type="GO" id="GO:0005737">
    <property type="term" value="C:cytoplasm"/>
    <property type="evidence" value="ECO:0007669"/>
    <property type="project" value="UniProtKB-SubCell"/>
</dbReference>
<dbReference type="GO" id="GO:0005634">
    <property type="term" value="C:nucleus"/>
    <property type="evidence" value="ECO:0000250"/>
    <property type="project" value="UniProtKB"/>
</dbReference>
<dbReference type="GO" id="GO:0042476">
    <property type="term" value="P:odontogenesis"/>
    <property type="evidence" value="ECO:0000315"/>
    <property type="project" value="ZFIN"/>
</dbReference>
<dbReference type="Gene3D" id="6.20.20.10">
    <property type="match status" value="1"/>
</dbReference>
<dbReference type="InterPro" id="IPR036410">
    <property type="entry name" value="HSP_DnaJ_Cys-rich_dom_sf"/>
</dbReference>
<dbReference type="InterPro" id="IPR052789">
    <property type="entry name" value="SSUH2_homolog"/>
</dbReference>
<dbReference type="PANTHER" id="PTHR48465">
    <property type="entry name" value="PROTEIN SSUH2 HOMOLOG"/>
    <property type="match status" value="1"/>
</dbReference>
<dbReference type="PANTHER" id="PTHR48465:SF1">
    <property type="entry name" value="PROTEIN SSUH2 HOMOLOG"/>
    <property type="match status" value="1"/>
</dbReference>
<dbReference type="SUPFAM" id="SSF57938">
    <property type="entry name" value="DnaJ/Hsp40 cysteine-rich domain"/>
    <property type="match status" value="1"/>
</dbReference>
<sequence length="361" mass="39475">MSASPAANTFGASAPPANMFDTVPGYEGTLAGGGGGYLPPPMPSVPMPVPEQAPHPPDWHIPSISEERAREAFATYVSSNCCYSSGPVTDGVITNMQSFNTYRYRLETFTESRSTEWSQEPYSGQPVDAGVQPAPGPWQIAAQPPPFFQDQKQAIKVPFTSSIKNCHVCLGMGNKPCTTCAGAGNKVCWVCNGSGSRLNDERCSHCNGQGRENCSSCSGNGSSQCDTCHGKRQLIVFINLNVKWSTEKEDFVAQDLSGLKVEKLEKVSGKELFKDSQFMVYPVMGFPDASVAQASQRIVRDHQTKFAQTSRILQQRQTIELIPVTKVNYTWKGNPYVYYVYGNEFEVNAEDYPATCCCSVM</sequence>
<keyword id="KW-0963">Cytoplasm</keyword>
<keyword id="KW-0539">Nucleus</keyword>
<keyword id="KW-1185">Reference proteome</keyword>
<accession>Q08C76</accession>
<accession>A0A0R4IG68</accession>
<accession>F1QCJ3</accession>
<reference key="1">
    <citation type="journal article" date="2013" name="Nature">
        <title>The zebrafish reference genome sequence and its relationship to the human genome.</title>
        <authorList>
            <person name="Howe K."/>
            <person name="Clark M.D."/>
            <person name="Torroja C.F."/>
            <person name="Torrance J."/>
            <person name="Berthelot C."/>
            <person name="Muffato M."/>
            <person name="Collins J.E."/>
            <person name="Humphray S."/>
            <person name="McLaren K."/>
            <person name="Matthews L."/>
            <person name="McLaren S."/>
            <person name="Sealy I."/>
            <person name="Caccamo M."/>
            <person name="Churcher C."/>
            <person name="Scott C."/>
            <person name="Barrett J.C."/>
            <person name="Koch R."/>
            <person name="Rauch G.J."/>
            <person name="White S."/>
            <person name="Chow W."/>
            <person name="Kilian B."/>
            <person name="Quintais L.T."/>
            <person name="Guerra-Assuncao J.A."/>
            <person name="Zhou Y."/>
            <person name="Gu Y."/>
            <person name="Yen J."/>
            <person name="Vogel J.H."/>
            <person name="Eyre T."/>
            <person name="Redmond S."/>
            <person name="Banerjee R."/>
            <person name="Chi J."/>
            <person name="Fu B."/>
            <person name="Langley E."/>
            <person name="Maguire S.F."/>
            <person name="Laird G.K."/>
            <person name="Lloyd D."/>
            <person name="Kenyon E."/>
            <person name="Donaldson S."/>
            <person name="Sehra H."/>
            <person name="Almeida-King J."/>
            <person name="Loveland J."/>
            <person name="Trevanion S."/>
            <person name="Jones M."/>
            <person name="Quail M."/>
            <person name="Willey D."/>
            <person name="Hunt A."/>
            <person name="Burton J."/>
            <person name="Sims S."/>
            <person name="McLay K."/>
            <person name="Plumb B."/>
            <person name="Davis J."/>
            <person name="Clee C."/>
            <person name="Oliver K."/>
            <person name="Clark R."/>
            <person name="Riddle C."/>
            <person name="Elliot D."/>
            <person name="Threadgold G."/>
            <person name="Harden G."/>
            <person name="Ware D."/>
            <person name="Begum S."/>
            <person name="Mortimore B."/>
            <person name="Kerry G."/>
            <person name="Heath P."/>
            <person name="Phillimore B."/>
            <person name="Tracey A."/>
            <person name="Corby N."/>
            <person name="Dunn M."/>
            <person name="Johnson C."/>
            <person name="Wood J."/>
            <person name="Clark S."/>
            <person name="Pelan S."/>
            <person name="Griffiths G."/>
            <person name="Smith M."/>
            <person name="Glithero R."/>
            <person name="Howden P."/>
            <person name="Barker N."/>
            <person name="Lloyd C."/>
            <person name="Stevens C."/>
            <person name="Harley J."/>
            <person name="Holt K."/>
            <person name="Panagiotidis G."/>
            <person name="Lovell J."/>
            <person name="Beasley H."/>
            <person name="Henderson C."/>
            <person name="Gordon D."/>
            <person name="Auger K."/>
            <person name="Wright D."/>
            <person name="Collins J."/>
            <person name="Raisen C."/>
            <person name="Dyer L."/>
            <person name="Leung K."/>
            <person name="Robertson L."/>
            <person name="Ambridge K."/>
            <person name="Leongamornlert D."/>
            <person name="McGuire S."/>
            <person name="Gilderthorp R."/>
            <person name="Griffiths C."/>
            <person name="Manthravadi D."/>
            <person name="Nichol S."/>
            <person name="Barker G."/>
            <person name="Whitehead S."/>
            <person name="Kay M."/>
            <person name="Brown J."/>
            <person name="Murnane C."/>
            <person name="Gray E."/>
            <person name="Humphries M."/>
            <person name="Sycamore N."/>
            <person name="Barker D."/>
            <person name="Saunders D."/>
            <person name="Wallis J."/>
            <person name="Babbage A."/>
            <person name="Hammond S."/>
            <person name="Mashreghi-Mohammadi M."/>
            <person name="Barr L."/>
            <person name="Martin S."/>
            <person name="Wray P."/>
            <person name="Ellington A."/>
            <person name="Matthews N."/>
            <person name="Ellwood M."/>
            <person name="Woodmansey R."/>
            <person name="Clark G."/>
            <person name="Cooper J."/>
            <person name="Tromans A."/>
            <person name="Grafham D."/>
            <person name="Skuce C."/>
            <person name="Pandian R."/>
            <person name="Andrews R."/>
            <person name="Harrison E."/>
            <person name="Kimberley A."/>
            <person name="Garnett J."/>
            <person name="Fosker N."/>
            <person name="Hall R."/>
            <person name="Garner P."/>
            <person name="Kelly D."/>
            <person name="Bird C."/>
            <person name="Palmer S."/>
            <person name="Gehring I."/>
            <person name="Berger A."/>
            <person name="Dooley C.M."/>
            <person name="Ersan-Urun Z."/>
            <person name="Eser C."/>
            <person name="Geiger H."/>
            <person name="Geisler M."/>
            <person name="Karotki L."/>
            <person name="Kirn A."/>
            <person name="Konantz J."/>
            <person name="Konantz M."/>
            <person name="Oberlander M."/>
            <person name="Rudolph-Geiger S."/>
            <person name="Teucke M."/>
            <person name="Lanz C."/>
            <person name="Raddatz G."/>
            <person name="Osoegawa K."/>
            <person name="Zhu B."/>
            <person name="Rapp A."/>
            <person name="Widaa S."/>
            <person name="Langford C."/>
            <person name="Yang F."/>
            <person name="Schuster S.C."/>
            <person name="Carter N.P."/>
            <person name="Harrow J."/>
            <person name="Ning Z."/>
            <person name="Herrero J."/>
            <person name="Searle S.M."/>
            <person name="Enright A."/>
            <person name="Geisler R."/>
            <person name="Plasterk R.H."/>
            <person name="Lee C."/>
            <person name="Westerfield M."/>
            <person name="de Jong P.J."/>
            <person name="Zon L.I."/>
            <person name="Postlethwait J.H."/>
            <person name="Nusslein-Volhard C."/>
            <person name="Hubbard T.J."/>
            <person name="Roest Crollius H."/>
            <person name="Rogers J."/>
            <person name="Stemple D.L."/>
        </authorList>
    </citation>
    <scope>NUCLEOTIDE SEQUENCE [LARGE SCALE GENOMIC DNA]</scope>
    <source>
        <strain>Tuebingen</strain>
    </source>
</reference>
<reference key="2">
    <citation type="submission" date="2006-09" db="EMBL/GenBank/DDBJ databases">
        <authorList>
            <consortium name="NIH - Zebrafish Gene Collection (ZGC) project"/>
        </authorList>
    </citation>
    <scope>NUCLEOTIDE SEQUENCE [LARGE SCALE MRNA]</scope>
    <source>
        <tissue>Larval eye</tissue>
    </source>
</reference>
<reference key="3">
    <citation type="journal article" date="2017" name="Hum. Mutat.">
        <title>Mutation in SSUH2 causes autosomal-dominant dentin dysplasia type I.</title>
        <authorList>
            <person name="Xiong F."/>
            <person name="Ji Z."/>
            <person name="Liu Y."/>
            <person name="Zhang Y."/>
            <person name="Hu L."/>
            <person name="Yang Q."/>
            <person name="Qiu Q."/>
            <person name="Zhao L."/>
            <person name="Chen D."/>
            <person name="Tian Z."/>
            <person name="Shang X."/>
            <person name="Zhang L."/>
            <person name="Wei X."/>
            <person name="Liu C."/>
            <person name="Yu Q."/>
            <person name="Zhang M."/>
            <person name="Cheng J."/>
            <person name="Xiong J."/>
            <person name="Li D."/>
            <person name="Wu X."/>
            <person name="Yuan H."/>
            <person name="Zhang W."/>
            <person name="Xu X."/>
        </authorList>
    </citation>
    <scope>FUNCTION</scope>
    <scope>DEVELOPMENTAL STAGE</scope>
    <scope>DISRUPTION PHENOTYPE</scope>
</reference>
<evidence type="ECO:0000250" key="1">
    <source>
        <dbReference type="UniProtKB" id="Q9Y2M2"/>
    </source>
</evidence>
<evidence type="ECO:0000269" key="2">
    <source>
    </source>
</evidence>
<evidence type="ECO:0000305" key="3"/>
<evidence type="ECO:0000312" key="4">
    <source>
        <dbReference type="ZFIN" id="ZDB-GENE-060929-994"/>
    </source>
</evidence>
<organism>
    <name type="scientific">Danio rerio</name>
    <name type="common">Zebrafish</name>
    <name type="synonym">Brachydanio rerio</name>
    <dbReference type="NCBI Taxonomy" id="7955"/>
    <lineage>
        <taxon>Eukaryota</taxon>
        <taxon>Metazoa</taxon>
        <taxon>Chordata</taxon>
        <taxon>Craniata</taxon>
        <taxon>Vertebrata</taxon>
        <taxon>Euteleostomi</taxon>
        <taxon>Actinopterygii</taxon>
        <taxon>Neopterygii</taxon>
        <taxon>Teleostei</taxon>
        <taxon>Ostariophysi</taxon>
        <taxon>Cypriniformes</taxon>
        <taxon>Danionidae</taxon>
        <taxon>Danioninae</taxon>
        <taxon>Danio</taxon>
    </lineage>
</organism>
<protein>
    <recommendedName>
        <fullName evidence="1">Protein SSUH2 homolog</fullName>
    </recommendedName>
    <alternativeName>
        <fullName>Protein ssu-2 homolog</fullName>
    </alternativeName>
</protein>